<proteinExistence type="inferred from homology"/>
<evidence type="ECO:0000255" key="1">
    <source>
        <dbReference type="HAMAP-Rule" id="MF_00033"/>
    </source>
</evidence>
<dbReference type="EC" id="2.4.1.227" evidence="1"/>
<dbReference type="EMBL" id="AE014291">
    <property type="protein sequence ID" value="AAN30344.1"/>
    <property type="molecule type" value="Genomic_DNA"/>
</dbReference>
<dbReference type="EMBL" id="CP002997">
    <property type="protein sequence ID" value="AEM18760.1"/>
    <property type="molecule type" value="Genomic_DNA"/>
</dbReference>
<dbReference type="RefSeq" id="WP_006190601.1">
    <property type="nucleotide sequence ID" value="NZ_KN046804.1"/>
</dbReference>
<dbReference type="SMR" id="Q8CY39"/>
<dbReference type="CAZy" id="GT28">
    <property type="family name" value="Glycosyltransferase Family 28"/>
</dbReference>
<dbReference type="GeneID" id="45052442"/>
<dbReference type="KEGG" id="bms:BR1431"/>
<dbReference type="KEGG" id="bsi:BS1330_I1425"/>
<dbReference type="PATRIC" id="fig|204722.21.peg.918"/>
<dbReference type="HOGENOM" id="CLU_037404_2_1_5"/>
<dbReference type="PhylomeDB" id="Q8CY39"/>
<dbReference type="UniPathway" id="UPA00219"/>
<dbReference type="Proteomes" id="UP000007104">
    <property type="component" value="Chromosome I"/>
</dbReference>
<dbReference type="GO" id="GO:0005886">
    <property type="term" value="C:plasma membrane"/>
    <property type="evidence" value="ECO:0007669"/>
    <property type="project" value="UniProtKB-SubCell"/>
</dbReference>
<dbReference type="GO" id="GO:0051991">
    <property type="term" value="F:UDP-N-acetyl-D-glucosamine:N-acetylmuramoyl-L-alanyl-D-glutamyl-meso-2,6-diaminopimelyl-D-alanyl-D-alanine-diphosphoundecaprenol 4-beta-N-acetylglucosaminlytransferase activity"/>
    <property type="evidence" value="ECO:0007669"/>
    <property type="project" value="RHEA"/>
</dbReference>
<dbReference type="GO" id="GO:0050511">
    <property type="term" value="F:undecaprenyldiphospho-muramoylpentapeptide beta-N-acetylglucosaminyltransferase activity"/>
    <property type="evidence" value="ECO:0007669"/>
    <property type="project" value="UniProtKB-UniRule"/>
</dbReference>
<dbReference type="GO" id="GO:0005975">
    <property type="term" value="P:carbohydrate metabolic process"/>
    <property type="evidence" value="ECO:0007669"/>
    <property type="project" value="InterPro"/>
</dbReference>
<dbReference type="GO" id="GO:0051301">
    <property type="term" value="P:cell division"/>
    <property type="evidence" value="ECO:0007669"/>
    <property type="project" value="UniProtKB-KW"/>
</dbReference>
<dbReference type="GO" id="GO:0071555">
    <property type="term" value="P:cell wall organization"/>
    <property type="evidence" value="ECO:0007669"/>
    <property type="project" value="UniProtKB-KW"/>
</dbReference>
<dbReference type="GO" id="GO:0030259">
    <property type="term" value="P:lipid glycosylation"/>
    <property type="evidence" value="ECO:0007669"/>
    <property type="project" value="UniProtKB-UniRule"/>
</dbReference>
<dbReference type="GO" id="GO:0009252">
    <property type="term" value="P:peptidoglycan biosynthetic process"/>
    <property type="evidence" value="ECO:0007669"/>
    <property type="project" value="UniProtKB-UniRule"/>
</dbReference>
<dbReference type="GO" id="GO:0008360">
    <property type="term" value="P:regulation of cell shape"/>
    <property type="evidence" value="ECO:0007669"/>
    <property type="project" value="UniProtKB-KW"/>
</dbReference>
<dbReference type="CDD" id="cd03785">
    <property type="entry name" value="GT28_MurG"/>
    <property type="match status" value="1"/>
</dbReference>
<dbReference type="Gene3D" id="3.40.50.2000">
    <property type="entry name" value="Glycogen Phosphorylase B"/>
    <property type="match status" value="2"/>
</dbReference>
<dbReference type="HAMAP" id="MF_00033">
    <property type="entry name" value="MurG"/>
    <property type="match status" value="1"/>
</dbReference>
<dbReference type="InterPro" id="IPR006009">
    <property type="entry name" value="GlcNAc_MurG"/>
</dbReference>
<dbReference type="InterPro" id="IPR007235">
    <property type="entry name" value="Glyco_trans_28_C"/>
</dbReference>
<dbReference type="InterPro" id="IPR004276">
    <property type="entry name" value="GlycoTrans_28_N"/>
</dbReference>
<dbReference type="NCBIfam" id="TIGR01133">
    <property type="entry name" value="murG"/>
    <property type="match status" value="1"/>
</dbReference>
<dbReference type="PANTHER" id="PTHR21015:SF22">
    <property type="entry name" value="GLYCOSYLTRANSFERASE"/>
    <property type="match status" value="1"/>
</dbReference>
<dbReference type="PANTHER" id="PTHR21015">
    <property type="entry name" value="UDP-N-ACETYLGLUCOSAMINE--N-ACETYLMURAMYL-(PENTAPEPTIDE) PYROPHOSPHORYL-UNDECAPRENOL N-ACETYLGLUCOSAMINE TRANSFERASE 1"/>
    <property type="match status" value="1"/>
</dbReference>
<dbReference type="Pfam" id="PF04101">
    <property type="entry name" value="Glyco_tran_28_C"/>
    <property type="match status" value="1"/>
</dbReference>
<dbReference type="Pfam" id="PF03033">
    <property type="entry name" value="Glyco_transf_28"/>
    <property type="match status" value="1"/>
</dbReference>
<dbReference type="SUPFAM" id="SSF53756">
    <property type="entry name" value="UDP-Glycosyltransferase/glycogen phosphorylase"/>
    <property type="match status" value="1"/>
</dbReference>
<feature type="chain" id="PRO_0000109152" description="UDP-N-acetylglucosamine--N-acetylmuramyl-(pentapeptide) pyrophosphoryl-undecaprenol N-acetylglucosamine transferase">
    <location>
        <begin position="1"/>
        <end position="379"/>
    </location>
</feature>
<feature type="binding site" evidence="1">
    <location>
        <begin position="17"/>
        <end position="19"/>
    </location>
    <ligand>
        <name>UDP-N-acetyl-alpha-D-glucosamine</name>
        <dbReference type="ChEBI" id="CHEBI:57705"/>
    </ligand>
</feature>
<feature type="binding site" evidence="1">
    <location>
        <position position="128"/>
    </location>
    <ligand>
        <name>UDP-N-acetyl-alpha-D-glucosamine</name>
        <dbReference type="ChEBI" id="CHEBI:57705"/>
    </ligand>
</feature>
<feature type="binding site" evidence="1">
    <location>
        <position position="169"/>
    </location>
    <ligand>
        <name>UDP-N-acetyl-alpha-D-glucosamine</name>
        <dbReference type="ChEBI" id="CHEBI:57705"/>
    </ligand>
</feature>
<feature type="binding site" evidence="1">
    <location>
        <position position="197"/>
    </location>
    <ligand>
        <name>UDP-N-acetyl-alpha-D-glucosamine</name>
        <dbReference type="ChEBI" id="CHEBI:57705"/>
    </ligand>
</feature>
<feature type="binding site" evidence="1">
    <location>
        <position position="298"/>
    </location>
    <ligand>
        <name>UDP-N-acetyl-alpha-D-glucosamine</name>
        <dbReference type="ChEBI" id="CHEBI:57705"/>
    </ligand>
</feature>
<protein>
    <recommendedName>
        <fullName evidence="1">UDP-N-acetylglucosamine--N-acetylmuramyl-(pentapeptide) pyrophosphoryl-undecaprenol N-acetylglucosamine transferase</fullName>
        <ecNumber evidence="1">2.4.1.227</ecNumber>
    </recommendedName>
    <alternativeName>
        <fullName evidence="1">Undecaprenyl-PP-MurNAc-pentapeptide-UDPGlcNAc GlcNAc transferase</fullName>
    </alternativeName>
</protein>
<name>MURG_BRUSU</name>
<comment type="function">
    <text evidence="1">Cell wall formation. Catalyzes the transfer of a GlcNAc subunit on undecaprenyl-pyrophosphoryl-MurNAc-pentapeptide (lipid intermediate I) to form undecaprenyl-pyrophosphoryl-MurNAc-(pentapeptide)GlcNAc (lipid intermediate II).</text>
</comment>
<comment type="catalytic activity">
    <reaction evidence="1">
        <text>di-trans,octa-cis-undecaprenyl diphospho-N-acetyl-alpha-D-muramoyl-L-alanyl-D-glutamyl-meso-2,6-diaminopimeloyl-D-alanyl-D-alanine + UDP-N-acetyl-alpha-D-glucosamine = di-trans,octa-cis-undecaprenyl diphospho-[N-acetyl-alpha-D-glucosaminyl-(1-&gt;4)]-N-acetyl-alpha-D-muramoyl-L-alanyl-D-glutamyl-meso-2,6-diaminopimeloyl-D-alanyl-D-alanine + UDP + H(+)</text>
        <dbReference type="Rhea" id="RHEA:31227"/>
        <dbReference type="ChEBI" id="CHEBI:15378"/>
        <dbReference type="ChEBI" id="CHEBI:57705"/>
        <dbReference type="ChEBI" id="CHEBI:58223"/>
        <dbReference type="ChEBI" id="CHEBI:61387"/>
        <dbReference type="ChEBI" id="CHEBI:61388"/>
        <dbReference type="EC" id="2.4.1.227"/>
    </reaction>
</comment>
<comment type="pathway">
    <text evidence="1">Cell wall biogenesis; peptidoglycan biosynthesis.</text>
</comment>
<comment type="subcellular location">
    <subcellularLocation>
        <location evidence="1">Cell inner membrane</location>
        <topology evidence="1">Peripheral membrane protein</topology>
        <orientation evidence="1">Cytoplasmic side</orientation>
    </subcellularLocation>
</comment>
<comment type="similarity">
    <text evidence="1">Belongs to the glycosyltransferase 28 family. MurG subfamily.</text>
</comment>
<gene>
    <name evidence="1" type="primary">murG</name>
    <name type="ordered locus">BR1431</name>
    <name type="ordered locus">BS1330_I1425</name>
</gene>
<sequence length="379" mass="40236">MDNLANQGVIVLAAGGTGGHLFPAEALAHELRARGWDVHLATDARAQRFVGAFAQDHVHVIRSATIAGRNPVALLKTFWSLWQGNLDSRKLFRRLKPKLVVGFGGYPTLPPLYAASNMGIPTLIHEQNAVMGRANKGLAGRVKAIAGGFLPENSGAYAAKTVITGNPVRPPVLVAAATPYTPAGKDDRFRLLVFGGSQGAQFFSQAIPAAVALLPEHERARLLITQQARKEDEASARQAYEKLGVPADVAPFFNDMPARMADAHFVIARSGASTVSEITVIGRPAMLVPFPHALDHDQAANAAALAAAGGAEVVRQADLSPQRLAEMLQSAMNEPERLEQQAKAAKSVGKPDAARLLADLAEAIVSGKTVQEFKEGNRP</sequence>
<keyword id="KW-0131">Cell cycle</keyword>
<keyword id="KW-0132">Cell division</keyword>
<keyword id="KW-0997">Cell inner membrane</keyword>
<keyword id="KW-1003">Cell membrane</keyword>
<keyword id="KW-0133">Cell shape</keyword>
<keyword id="KW-0961">Cell wall biogenesis/degradation</keyword>
<keyword id="KW-0328">Glycosyltransferase</keyword>
<keyword id="KW-0472">Membrane</keyword>
<keyword id="KW-0573">Peptidoglycan synthesis</keyword>
<keyword id="KW-0808">Transferase</keyword>
<accession>Q8CY39</accession>
<accession>G0KBJ1</accession>
<organism>
    <name type="scientific">Brucella suis biovar 1 (strain 1330)</name>
    <dbReference type="NCBI Taxonomy" id="204722"/>
    <lineage>
        <taxon>Bacteria</taxon>
        <taxon>Pseudomonadati</taxon>
        <taxon>Pseudomonadota</taxon>
        <taxon>Alphaproteobacteria</taxon>
        <taxon>Hyphomicrobiales</taxon>
        <taxon>Brucellaceae</taxon>
        <taxon>Brucella/Ochrobactrum group</taxon>
        <taxon>Brucella</taxon>
    </lineage>
</organism>
<reference key="1">
    <citation type="journal article" date="2002" name="Proc. Natl. Acad. Sci. U.S.A.">
        <title>The Brucella suis genome reveals fundamental similarities between animal and plant pathogens and symbionts.</title>
        <authorList>
            <person name="Paulsen I.T."/>
            <person name="Seshadri R."/>
            <person name="Nelson K.E."/>
            <person name="Eisen J.A."/>
            <person name="Heidelberg J.F."/>
            <person name="Read T.D."/>
            <person name="Dodson R.J."/>
            <person name="Umayam L.A."/>
            <person name="Brinkac L.M."/>
            <person name="Beanan M.J."/>
            <person name="Daugherty S.C."/>
            <person name="DeBoy R.T."/>
            <person name="Durkin A.S."/>
            <person name="Kolonay J.F."/>
            <person name="Madupu R."/>
            <person name="Nelson W.C."/>
            <person name="Ayodeji B."/>
            <person name="Kraul M."/>
            <person name="Shetty J."/>
            <person name="Malek J.A."/>
            <person name="Van Aken S.E."/>
            <person name="Riedmuller S."/>
            <person name="Tettelin H."/>
            <person name="Gill S.R."/>
            <person name="White O."/>
            <person name="Salzberg S.L."/>
            <person name="Hoover D.L."/>
            <person name="Lindler L.E."/>
            <person name="Halling S.M."/>
            <person name="Boyle S.M."/>
            <person name="Fraser C.M."/>
        </authorList>
    </citation>
    <scope>NUCLEOTIDE SEQUENCE [LARGE SCALE GENOMIC DNA]</scope>
    <source>
        <strain>1330</strain>
    </source>
</reference>
<reference key="2">
    <citation type="journal article" date="2011" name="J. Bacteriol.">
        <title>Revised genome sequence of Brucella suis 1330.</title>
        <authorList>
            <person name="Tae H."/>
            <person name="Shallom S."/>
            <person name="Settlage R."/>
            <person name="Preston D."/>
            <person name="Adams L.G."/>
            <person name="Garner H.R."/>
        </authorList>
    </citation>
    <scope>NUCLEOTIDE SEQUENCE [LARGE SCALE GENOMIC DNA]</scope>
    <source>
        <strain>1330</strain>
    </source>
</reference>